<comment type="function">
    <text evidence="1">Catalyzes the reversible reaction in which hydroxymethyl group from 5,10-methylenetetrahydrofolate is transferred onto alpha-ketoisovalerate to form ketopantoate.</text>
</comment>
<comment type="catalytic activity">
    <reaction evidence="1">
        <text>3-methyl-2-oxobutanoate + (6R)-5,10-methylene-5,6,7,8-tetrahydrofolate + H2O = 2-dehydropantoate + (6S)-5,6,7,8-tetrahydrofolate</text>
        <dbReference type="Rhea" id="RHEA:11824"/>
        <dbReference type="ChEBI" id="CHEBI:11561"/>
        <dbReference type="ChEBI" id="CHEBI:11851"/>
        <dbReference type="ChEBI" id="CHEBI:15377"/>
        <dbReference type="ChEBI" id="CHEBI:15636"/>
        <dbReference type="ChEBI" id="CHEBI:57453"/>
        <dbReference type="EC" id="2.1.2.11"/>
    </reaction>
</comment>
<comment type="cofactor">
    <cofactor evidence="1">
        <name>Mg(2+)</name>
        <dbReference type="ChEBI" id="CHEBI:18420"/>
    </cofactor>
    <text evidence="1">Binds 1 Mg(2+) ion per subunit.</text>
</comment>
<comment type="pathway">
    <text evidence="1">Cofactor biosynthesis; (R)-pantothenate biosynthesis; (R)-pantoate from 3-methyl-2-oxobutanoate: step 1/2.</text>
</comment>
<comment type="subunit">
    <text evidence="1">Homodecamer; pentamer of dimers.</text>
</comment>
<comment type="subcellular location">
    <subcellularLocation>
        <location evidence="1">Cytoplasm</location>
    </subcellularLocation>
</comment>
<comment type="similarity">
    <text evidence="1">Belongs to the PanB family.</text>
</comment>
<feature type="chain" id="PRO_1000118126" description="3-methyl-2-oxobutanoate hydroxymethyltransferase">
    <location>
        <begin position="1"/>
        <end position="264"/>
    </location>
</feature>
<feature type="active site" description="Proton acceptor" evidence="1">
    <location>
        <position position="181"/>
    </location>
</feature>
<feature type="binding site" evidence="1">
    <location>
        <begin position="45"/>
        <end position="46"/>
    </location>
    <ligand>
        <name>3-methyl-2-oxobutanoate</name>
        <dbReference type="ChEBI" id="CHEBI:11851"/>
    </ligand>
</feature>
<feature type="binding site" evidence="1">
    <location>
        <position position="45"/>
    </location>
    <ligand>
        <name>Mg(2+)</name>
        <dbReference type="ChEBI" id="CHEBI:18420"/>
    </ligand>
</feature>
<feature type="binding site" evidence="1">
    <location>
        <position position="84"/>
    </location>
    <ligand>
        <name>3-methyl-2-oxobutanoate</name>
        <dbReference type="ChEBI" id="CHEBI:11851"/>
    </ligand>
</feature>
<feature type="binding site" evidence="1">
    <location>
        <position position="84"/>
    </location>
    <ligand>
        <name>Mg(2+)</name>
        <dbReference type="ChEBI" id="CHEBI:18420"/>
    </ligand>
</feature>
<feature type="binding site" evidence="1">
    <location>
        <position position="112"/>
    </location>
    <ligand>
        <name>3-methyl-2-oxobutanoate</name>
        <dbReference type="ChEBI" id="CHEBI:11851"/>
    </ligand>
</feature>
<feature type="binding site" evidence="1">
    <location>
        <position position="114"/>
    </location>
    <ligand>
        <name>Mg(2+)</name>
        <dbReference type="ChEBI" id="CHEBI:18420"/>
    </ligand>
</feature>
<protein>
    <recommendedName>
        <fullName evidence="1">3-methyl-2-oxobutanoate hydroxymethyltransferase</fullName>
        <ecNumber evidence="1">2.1.2.11</ecNumber>
    </recommendedName>
    <alternativeName>
        <fullName evidence="1">Ketopantoate hydroxymethyltransferase</fullName>
        <shortName evidence="1">KPHMT</shortName>
    </alternativeName>
</protein>
<accession>B1LGT6</accession>
<proteinExistence type="inferred from homology"/>
<evidence type="ECO:0000255" key="1">
    <source>
        <dbReference type="HAMAP-Rule" id="MF_00156"/>
    </source>
</evidence>
<gene>
    <name evidence="1" type="primary">panB</name>
    <name type="ordered locus">EcSMS35_0145</name>
</gene>
<keyword id="KW-0963">Cytoplasm</keyword>
<keyword id="KW-0460">Magnesium</keyword>
<keyword id="KW-0479">Metal-binding</keyword>
<keyword id="KW-0566">Pantothenate biosynthesis</keyword>
<keyword id="KW-0808">Transferase</keyword>
<sequence>MKPTTIASLQKCKQDKKRFATITAYDYSFAKLFAEEGLNVMLVGDSLGMTVQGHDSTLPVTVADIAYHTAAVRRGAPNCLLLADLPFMAYATPEQAFENAATVMRAGANMVKIEGGEWLVETVQMLTERAVPVCGHLGLTPQSVNIFGGYKVQGRGDEAGDQLLSDALALEAAGAQLLVLECVPVELAKRITEALAIPVIGIGAGNVTDGQILVMHDAFGITGGHIPKFAKNFLAETGDIRAAVRQYMAEVESGVYPGEEHSFH</sequence>
<organism>
    <name type="scientific">Escherichia coli (strain SMS-3-5 / SECEC)</name>
    <dbReference type="NCBI Taxonomy" id="439855"/>
    <lineage>
        <taxon>Bacteria</taxon>
        <taxon>Pseudomonadati</taxon>
        <taxon>Pseudomonadota</taxon>
        <taxon>Gammaproteobacteria</taxon>
        <taxon>Enterobacterales</taxon>
        <taxon>Enterobacteriaceae</taxon>
        <taxon>Escherichia</taxon>
    </lineage>
</organism>
<name>PANB_ECOSM</name>
<dbReference type="EC" id="2.1.2.11" evidence="1"/>
<dbReference type="EMBL" id="CP000970">
    <property type="protein sequence ID" value="ACB18352.1"/>
    <property type="molecule type" value="Genomic_DNA"/>
</dbReference>
<dbReference type="RefSeq" id="WP_000805461.1">
    <property type="nucleotide sequence ID" value="NC_010498.1"/>
</dbReference>
<dbReference type="SMR" id="B1LGT6"/>
<dbReference type="KEGG" id="ecm:EcSMS35_0145"/>
<dbReference type="HOGENOM" id="CLU_036645_1_0_6"/>
<dbReference type="UniPathway" id="UPA00028">
    <property type="reaction ID" value="UER00003"/>
</dbReference>
<dbReference type="Proteomes" id="UP000007011">
    <property type="component" value="Chromosome"/>
</dbReference>
<dbReference type="GO" id="GO:0005737">
    <property type="term" value="C:cytoplasm"/>
    <property type="evidence" value="ECO:0007669"/>
    <property type="project" value="UniProtKB-SubCell"/>
</dbReference>
<dbReference type="GO" id="GO:0003864">
    <property type="term" value="F:3-methyl-2-oxobutanoate hydroxymethyltransferase activity"/>
    <property type="evidence" value="ECO:0007669"/>
    <property type="project" value="UniProtKB-UniRule"/>
</dbReference>
<dbReference type="GO" id="GO:0000287">
    <property type="term" value="F:magnesium ion binding"/>
    <property type="evidence" value="ECO:0007669"/>
    <property type="project" value="TreeGrafter"/>
</dbReference>
<dbReference type="GO" id="GO:0015940">
    <property type="term" value="P:pantothenate biosynthetic process"/>
    <property type="evidence" value="ECO:0007669"/>
    <property type="project" value="UniProtKB-UniRule"/>
</dbReference>
<dbReference type="CDD" id="cd06557">
    <property type="entry name" value="KPHMT-like"/>
    <property type="match status" value="1"/>
</dbReference>
<dbReference type="FunFam" id="3.20.20.60:FF:000003">
    <property type="entry name" value="3-methyl-2-oxobutanoate hydroxymethyltransferase"/>
    <property type="match status" value="1"/>
</dbReference>
<dbReference type="Gene3D" id="3.20.20.60">
    <property type="entry name" value="Phosphoenolpyruvate-binding domains"/>
    <property type="match status" value="1"/>
</dbReference>
<dbReference type="HAMAP" id="MF_00156">
    <property type="entry name" value="PanB"/>
    <property type="match status" value="1"/>
</dbReference>
<dbReference type="InterPro" id="IPR003700">
    <property type="entry name" value="Pantoate_hydroxy_MeTrfase"/>
</dbReference>
<dbReference type="InterPro" id="IPR015813">
    <property type="entry name" value="Pyrv/PenolPyrv_kinase-like_dom"/>
</dbReference>
<dbReference type="InterPro" id="IPR040442">
    <property type="entry name" value="Pyrv_kinase-like_dom_sf"/>
</dbReference>
<dbReference type="NCBIfam" id="TIGR00222">
    <property type="entry name" value="panB"/>
    <property type="match status" value="1"/>
</dbReference>
<dbReference type="NCBIfam" id="NF001452">
    <property type="entry name" value="PRK00311.1"/>
    <property type="match status" value="1"/>
</dbReference>
<dbReference type="PANTHER" id="PTHR20881">
    <property type="entry name" value="3-METHYL-2-OXOBUTANOATE HYDROXYMETHYLTRANSFERASE"/>
    <property type="match status" value="1"/>
</dbReference>
<dbReference type="PANTHER" id="PTHR20881:SF0">
    <property type="entry name" value="3-METHYL-2-OXOBUTANOATE HYDROXYMETHYLTRANSFERASE"/>
    <property type="match status" value="1"/>
</dbReference>
<dbReference type="Pfam" id="PF02548">
    <property type="entry name" value="Pantoate_transf"/>
    <property type="match status" value="1"/>
</dbReference>
<dbReference type="PIRSF" id="PIRSF000388">
    <property type="entry name" value="Pantoate_hydroxy_MeTrfase"/>
    <property type="match status" value="1"/>
</dbReference>
<dbReference type="SUPFAM" id="SSF51621">
    <property type="entry name" value="Phosphoenolpyruvate/pyruvate domain"/>
    <property type="match status" value="1"/>
</dbReference>
<reference key="1">
    <citation type="journal article" date="2008" name="J. Bacteriol.">
        <title>Insights into the environmental resistance gene pool from the genome sequence of the multidrug-resistant environmental isolate Escherichia coli SMS-3-5.</title>
        <authorList>
            <person name="Fricke W.F."/>
            <person name="Wright M.S."/>
            <person name="Lindell A.H."/>
            <person name="Harkins D.M."/>
            <person name="Baker-Austin C."/>
            <person name="Ravel J."/>
            <person name="Stepanauskas R."/>
        </authorList>
    </citation>
    <scope>NUCLEOTIDE SEQUENCE [LARGE SCALE GENOMIC DNA]</scope>
    <source>
        <strain>SMS-3-5 / SECEC</strain>
    </source>
</reference>